<reference key="1">
    <citation type="journal article" date="2004" name="J. Infect. Dis.">
        <title>Progress toward characterization of the group A Streptococcus metagenome: complete genome sequence of a macrolide-resistant serotype M6 strain.</title>
        <authorList>
            <person name="Banks D.J."/>
            <person name="Porcella S.F."/>
            <person name="Barbian K.D."/>
            <person name="Beres S.B."/>
            <person name="Philips L.E."/>
            <person name="Voyich J.M."/>
            <person name="DeLeo F.R."/>
            <person name="Martin J.M."/>
            <person name="Somerville G.A."/>
            <person name="Musser J.M."/>
        </authorList>
    </citation>
    <scope>NUCLEOTIDE SEQUENCE [LARGE SCALE GENOMIC DNA]</scope>
    <source>
        <strain>ATCC BAA-946 / MGAS10394</strain>
    </source>
</reference>
<keyword id="KW-0479">Metal-binding</keyword>
<keyword id="KW-0687">Ribonucleoprotein</keyword>
<keyword id="KW-0689">Ribosomal protein</keyword>
<keyword id="KW-0694">RNA-binding</keyword>
<keyword id="KW-0699">rRNA-binding</keyword>
<keyword id="KW-0862">Zinc</keyword>
<comment type="function">
    <text evidence="1">Binds 16S rRNA, required for the assembly of 30S particles and may also be responsible for determining the conformation of the 16S rRNA at the A site.</text>
</comment>
<comment type="cofactor">
    <cofactor evidence="1">
        <name>Zn(2+)</name>
        <dbReference type="ChEBI" id="CHEBI:29105"/>
    </cofactor>
    <text evidence="1">Binds 1 zinc ion per subunit.</text>
</comment>
<comment type="subunit">
    <text evidence="1">Part of the 30S ribosomal subunit. Contacts proteins S3 and S10.</text>
</comment>
<comment type="similarity">
    <text evidence="1">Belongs to the universal ribosomal protein uS14 family. Zinc-binding uS14 subfamily.</text>
</comment>
<accession>Q5XEC2</accession>
<evidence type="ECO:0000255" key="1">
    <source>
        <dbReference type="HAMAP-Rule" id="MF_01364"/>
    </source>
</evidence>
<evidence type="ECO:0000305" key="2"/>
<protein>
    <recommendedName>
        <fullName evidence="1">Small ribosomal subunit protein uS14B</fullName>
    </recommendedName>
    <alternativeName>
        <fullName evidence="2">30S ribosomal protein S14 type Z</fullName>
    </alternativeName>
</protein>
<dbReference type="EMBL" id="CP000003">
    <property type="protein sequence ID" value="AAT86241.1"/>
    <property type="molecule type" value="Genomic_DNA"/>
</dbReference>
<dbReference type="RefSeq" id="WP_002987746.1">
    <property type="nucleotide sequence ID" value="NC_006086.1"/>
</dbReference>
<dbReference type="SMR" id="Q5XEC2"/>
<dbReference type="KEGG" id="spa:M6_Spy0106"/>
<dbReference type="HOGENOM" id="CLU_139869_3_0_9"/>
<dbReference type="Proteomes" id="UP000001167">
    <property type="component" value="Chromosome"/>
</dbReference>
<dbReference type="GO" id="GO:0015935">
    <property type="term" value="C:small ribosomal subunit"/>
    <property type="evidence" value="ECO:0007669"/>
    <property type="project" value="TreeGrafter"/>
</dbReference>
<dbReference type="GO" id="GO:0019843">
    <property type="term" value="F:rRNA binding"/>
    <property type="evidence" value="ECO:0007669"/>
    <property type="project" value="UniProtKB-UniRule"/>
</dbReference>
<dbReference type="GO" id="GO:0003735">
    <property type="term" value="F:structural constituent of ribosome"/>
    <property type="evidence" value="ECO:0007669"/>
    <property type="project" value="InterPro"/>
</dbReference>
<dbReference type="GO" id="GO:0008270">
    <property type="term" value="F:zinc ion binding"/>
    <property type="evidence" value="ECO:0007669"/>
    <property type="project" value="UniProtKB-UniRule"/>
</dbReference>
<dbReference type="GO" id="GO:0006412">
    <property type="term" value="P:translation"/>
    <property type="evidence" value="ECO:0007669"/>
    <property type="project" value="UniProtKB-UniRule"/>
</dbReference>
<dbReference type="FunFam" id="4.10.830.10:FF:000001">
    <property type="entry name" value="30S ribosomal protein S14 type Z"/>
    <property type="match status" value="1"/>
</dbReference>
<dbReference type="Gene3D" id="4.10.830.10">
    <property type="entry name" value="30s Ribosomal Protein S14, Chain N"/>
    <property type="match status" value="1"/>
</dbReference>
<dbReference type="HAMAP" id="MF_01364_B">
    <property type="entry name" value="Ribosomal_uS14_2_B"/>
    <property type="match status" value="1"/>
</dbReference>
<dbReference type="InterPro" id="IPR001209">
    <property type="entry name" value="Ribosomal_uS14"/>
</dbReference>
<dbReference type="InterPro" id="IPR023053">
    <property type="entry name" value="Ribosomal_uS14_bact"/>
</dbReference>
<dbReference type="InterPro" id="IPR018271">
    <property type="entry name" value="Ribosomal_uS14_CS"/>
</dbReference>
<dbReference type="InterPro" id="IPR043140">
    <property type="entry name" value="Ribosomal_uS14_sf"/>
</dbReference>
<dbReference type="NCBIfam" id="NF005974">
    <property type="entry name" value="PRK08061.1"/>
    <property type="match status" value="1"/>
</dbReference>
<dbReference type="PANTHER" id="PTHR19836">
    <property type="entry name" value="30S RIBOSOMAL PROTEIN S14"/>
    <property type="match status" value="1"/>
</dbReference>
<dbReference type="PANTHER" id="PTHR19836:SF26">
    <property type="entry name" value="SMALL RIBOSOMAL SUBUNIT PROTEIN US14B"/>
    <property type="match status" value="1"/>
</dbReference>
<dbReference type="Pfam" id="PF00253">
    <property type="entry name" value="Ribosomal_S14"/>
    <property type="match status" value="1"/>
</dbReference>
<dbReference type="SUPFAM" id="SSF57716">
    <property type="entry name" value="Glucocorticoid receptor-like (DNA-binding domain)"/>
    <property type="match status" value="1"/>
</dbReference>
<dbReference type="PROSITE" id="PS00527">
    <property type="entry name" value="RIBOSOMAL_S14"/>
    <property type="match status" value="1"/>
</dbReference>
<feature type="chain" id="PRO_0000130947" description="Small ribosomal subunit protein uS14B">
    <location>
        <begin position="1"/>
        <end position="61"/>
    </location>
</feature>
<feature type="binding site" evidence="1">
    <location>
        <position position="24"/>
    </location>
    <ligand>
        <name>Zn(2+)</name>
        <dbReference type="ChEBI" id="CHEBI:29105"/>
    </ligand>
</feature>
<feature type="binding site" evidence="1">
    <location>
        <position position="27"/>
    </location>
    <ligand>
        <name>Zn(2+)</name>
        <dbReference type="ChEBI" id="CHEBI:29105"/>
    </ligand>
</feature>
<feature type="binding site" evidence="1">
    <location>
        <position position="40"/>
    </location>
    <ligand>
        <name>Zn(2+)</name>
        <dbReference type="ChEBI" id="CHEBI:29105"/>
    </ligand>
</feature>
<feature type="binding site" evidence="1">
    <location>
        <position position="43"/>
    </location>
    <ligand>
        <name>Zn(2+)</name>
        <dbReference type="ChEBI" id="CHEBI:29105"/>
    </ligand>
</feature>
<sequence length="61" mass="7073">MAKKSMIAKNKRPAKHSTQAYTRCEKCGRPHSVYRKFKLCRVCFRELAYKGQIPGVVKASW</sequence>
<name>RS14Z_STRP6</name>
<organism>
    <name type="scientific">Streptococcus pyogenes serotype M6 (strain ATCC BAA-946 / MGAS10394)</name>
    <dbReference type="NCBI Taxonomy" id="286636"/>
    <lineage>
        <taxon>Bacteria</taxon>
        <taxon>Bacillati</taxon>
        <taxon>Bacillota</taxon>
        <taxon>Bacilli</taxon>
        <taxon>Lactobacillales</taxon>
        <taxon>Streptococcaceae</taxon>
        <taxon>Streptococcus</taxon>
    </lineage>
</organism>
<gene>
    <name evidence="1" type="primary">rpsZ</name>
    <name evidence="1" type="synonym">rpsN1</name>
    <name type="ordered locus">M6_Spy0106</name>
</gene>
<proteinExistence type="inferred from homology"/>